<accession>Q9LNA5</accession>
<gene>
    <name evidence="3" type="primary">ACR8</name>
    <name evidence="6" type="ordered locus">At1g12420</name>
    <name evidence="7" type="ORF">F5O11.14</name>
</gene>
<reference key="1">
    <citation type="journal article" date="2002" name="Plant Physiol.">
        <title>Molecular characterization of a novel gene family encoding ACT domain repeat proteins in Arabidopsis.</title>
        <authorList>
            <person name="Hsieh M.-H."/>
            <person name="Goodman H.M."/>
        </authorList>
    </citation>
    <scope>NUCLEOTIDE SEQUENCE [MRNA]</scope>
    <scope>FUNCTION</scope>
    <scope>TISSUE SPECIFICITY</scope>
    <scope>INDUCTION</scope>
</reference>
<reference key="2">
    <citation type="journal article" date="2000" name="Nature">
        <title>Sequence and analysis of chromosome 1 of the plant Arabidopsis thaliana.</title>
        <authorList>
            <person name="Theologis A."/>
            <person name="Ecker J.R."/>
            <person name="Palm C.J."/>
            <person name="Federspiel N.A."/>
            <person name="Kaul S."/>
            <person name="White O."/>
            <person name="Alonso J."/>
            <person name="Altafi H."/>
            <person name="Araujo R."/>
            <person name="Bowman C.L."/>
            <person name="Brooks S.Y."/>
            <person name="Buehler E."/>
            <person name="Chan A."/>
            <person name="Chao Q."/>
            <person name="Chen H."/>
            <person name="Cheuk R.F."/>
            <person name="Chin C.W."/>
            <person name="Chung M.K."/>
            <person name="Conn L."/>
            <person name="Conway A.B."/>
            <person name="Conway A.R."/>
            <person name="Creasy T.H."/>
            <person name="Dewar K."/>
            <person name="Dunn P."/>
            <person name="Etgu P."/>
            <person name="Feldblyum T.V."/>
            <person name="Feng J.-D."/>
            <person name="Fong B."/>
            <person name="Fujii C.Y."/>
            <person name="Gill J.E."/>
            <person name="Goldsmith A.D."/>
            <person name="Haas B."/>
            <person name="Hansen N.F."/>
            <person name="Hughes B."/>
            <person name="Huizar L."/>
            <person name="Hunter J.L."/>
            <person name="Jenkins J."/>
            <person name="Johnson-Hopson C."/>
            <person name="Khan S."/>
            <person name="Khaykin E."/>
            <person name="Kim C.J."/>
            <person name="Koo H.L."/>
            <person name="Kremenetskaia I."/>
            <person name="Kurtz D.B."/>
            <person name="Kwan A."/>
            <person name="Lam B."/>
            <person name="Langin-Hooper S."/>
            <person name="Lee A."/>
            <person name="Lee J.M."/>
            <person name="Lenz C.A."/>
            <person name="Li J.H."/>
            <person name="Li Y.-P."/>
            <person name="Lin X."/>
            <person name="Liu S.X."/>
            <person name="Liu Z.A."/>
            <person name="Luros J.S."/>
            <person name="Maiti R."/>
            <person name="Marziali A."/>
            <person name="Militscher J."/>
            <person name="Miranda M."/>
            <person name="Nguyen M."/>
            <person name="Nierman W.C."/>
            <person name="Osborne B.I."/>
            <person name="Pai G."/>
            <person name="Peterson J."/>
            <person name="Pham P.K."/>
            <person name="Rizzo M."/>
            <person name="Rooney T."/>
            <person name="Rowley D."/>
            <person name="Sakano H."/>
            <person name="Salzberg S.L."/>
            <person name="Schwartz J.R."/>
            <person name="Shinn P."/>
            <person name="Southwick A.M."/>
            <person name="Sun H."/>
            <person name="Tallon L.J."/>
            <person name="Tambunga G."/>
            <person name="Toriumi M.J."/>
            <person name="Town C.D."/>
            <person name="Utterback T."/>
            <person name="Van Aken S."/>
            <person name="Vaysberg M."/>
            <person name="Vysotskaia V.S."/>
            <person name="Walker M."/>
            <person name="Wu D."/>
            <person name="Yu G."/>
            <person name="Fraser C.M."/>
            <person name="Venter J.C."/>
            <person name="Davis R.W."/>
        </authorList>
    </citation>
    <scope>NUCLEOTIDE SEQUENCE [LARGE SCALE GENOMIC DNA]</scope>
    <source>
        <strain>cv. Columbia</strain>
    </source>
</reference>
<reference key="3">
    <citation type="journal article" date="2017" name="Plant J.">
        <title>Araport11: a complete reannotation of the Arabidopsis thaliana reference genome.</title>
        <authorList>
            <person name="Cheng C.Y."/>
            <person name="Krishnakumar V."/>
            <person name="Chan A.P."/>
            <person name="Thibaud-Nissen F."/>
            <person name="Schobel S."/>
            <person name="Town C.D."/>
        </authorList>
    </citation>
    <scope>GENOME REANNOTATION</scope>
    <source>
        <strain>cv. Columbia</strain>
    </source>
</reference>
<reference key="4">
    <citation type="submission" date="2006-07" db="EMBL/GenBank/DDBJ databases">
        <title>Large-scale analysis of RIKEN Arabidopsis full-length (RAFL) cDNAs.</title>
        <authorList>
            <person name="Totoki Y."/>
            <person name="Seki M."/>
            <person name="Ishida J."/>
            <person name="Nakajima M."/>
            <person name="Enju A."/>
            <person name="Kamiya A."/>
            <person name="Narusaka M."/>
            <person name="Shin-i T."/>
            <person name="Nakagawa M."/>
            <person name="Sakamoto N."/>
            <person name="Oishi K."/>
            <person name="Kohara Y."/>
            <person name="Kobayashi M."/>
            <person name="Toyoda A."/>
            <person name="Sakaki Y."/>
            <person name="Sakurai T."/>
            <person name="Iida K."/>
            <person name="Akiyama K."/>
            <person name="Satou M."/>
            <person name="Toyoda T."/>
            <person name="Konagaya A."/>
            <person name="Carninci P."/>
            <person name="Kawai J."/>
            <person name="Hayashizaki Y."/>
            <person name="Shinozaki K."/>
        </authorList>
    </citation>
    <scope>NUCLEOTIDE SEQUENCE [LARGE SCALE MRNA]</scope>
    <source>
        <strain>cv. Columbia</strain>
    </source>
</reference>
<reference key="5">
    <citation type="submission" date="2006-08" db="EMBL/GenBank/DDBJ databases">
        <title>Arabidopsis ORF Clones.</title>
        <authorList>
            <person name="Quinitio C."/>
            <person name="Chen H."/>
            <person name="Kim C.J."/>
            <person name="Shinn P."/>
            <person name="Ecker J.R."/>
        </authorList>
    </citation>
    <scope>NUCLEOTIDE SEQUENCE [LARGE SCALE MRNA]</scope>
    <source>
        <strain>cv. Columbia</strain>
    </source>
</reference>
<feature type="chain" id="PRO_0000431462" description="ACT domain-containing protein ACR8">
    <location>
        <begin position="1"/>
        <end position="441"/>
    </location>
</feature>
<feature type="domain" description="ACT 1" evidence="1">
    <location>
        <begin position="34"/>
        <end position="110"/>
    </location>
</feature>
<feature type="domain" description="ACT 2" evidence="1">
    <location>
        <begin position="115"/>
        <end position="196"/>
    </location>
</feature>
<feature type="domain" description="ACT 3" evidence="5">
    <location>
        <begin position="248"/>
        <end position="324"/>
    </location>
</feature>
<feature type="domain" description="ACT 4" evidence="1">
    <location>
        <begin position="326"/>
        <end position="405"/>
    </location>
</feature>
<sequence length="441" mass="49961">MAMKGYLDEYEKLVIRMNTPRVVIDNGVCSSATIVKVDSSRRNGILLEAVQILTDLNLSIKKAYISSDGTWNMDVFHVTDLNGNKLNDQSVLRYIEQSIETVYYGENIEVNGLTALELTGTDRIGLLSEMFAVLSDLNCDVVDAKLWTHNGRVASVIYLKDCISGAPILDSHRISKIEGRLKNVLNGDNDVNSAAKTCVTVDSMMHIERRLHQLMFEDRDYERRSKKHERSPMVVVTVQNWAERGYSVVNVHCRDRTKLLFDVVCTLTDMEYAVFHATINTAEDQAHLEFYIRHKDGSPISSEAERQRVIQCLEAAVERRALEGVRLELRHPDKQGLLAEVTRTFRENGLNVTRTEISTSSDMATNIFYVTDANGDEPDFKLIESVREKIGLECLRVKEMPTMYHKKGDGEEQQQTKAVLVSLGSLVWRNLFNFGLIKSCS</sequence>
<keyword id="KW-1185">Reference proteome</keyword>
<keyword id="KW-0677">Repeat</keyword>
<evidence type="ECO:0000255" key="1">
    <source>
        <dbReference type="PROSITE-ProRule" id="PRU01007"/>
    </source>
</evidence>
<evidence type="ECO:0000269" key="2">
    <source>
    </source>
</evidence>
<evidence type="ECO:0000303" key="3">
    <source>
    </source>
</evidence>
<evidence type="ECO:0000305" key="4"/>
<evidence type="ECO:0000305" key="5">
    <source>
    </source>
</evidence>
<evidence type="ECO:0000312" key="6">
    <source>
        <dbReference type="Araport" id="AT1G12420"/>
    </source>
</evidence>
<evidence type="ECO:0000312" key="7">
    <source>
        <dbReference type="EMBL" id="AAF79655.1"/>
    </source>
</evidence>
<proteinExistence type="evidence at transcript level"/>
<dbReference type="EMBL" id="AF528064">
    <property type="protein sequence ID" value="AAM93433.1"/>
    <property type="molecule type" value="mRNA"/>
</dbReference>
<dbReference type="EMBL" id="AC025416">
    <property type="protein sequence ID" value="AAF79655.1"/>
    <property type="molecule type" value="Genomic_DNA"/>
</dbReference>
<dbReference type="EMBL" id="CP002684">
    <property type="protein sequence ID" value="AEE28878.1"/>
    <property type="molecule type" value="Genomic_DNA"/>
</dbReference>
<dbReference type="EMBL" id="AK228687">
    <property type="protein sequence ID" value="BAF00592.1"/>
    <property type="molecule type" value="mRNA"/>
</dbReference>
<dbReference type="EMBL" id="BT026518">
    <property type="protein sequence ID" value="ABH04625.1"/>
    <property type="molecule type" value="mRNA"/>
</dbReference>
<dbReference type="PIR" id="F86258">
    <property type="entry name" value="F86258"/>
</dbReference>
<dbReference type="RefSeq" id="NP_172704.1">
    <property type="nucleotide sequence ID" value="NM_101114.4"/>
</dbReference>
<dbReference type="FunCoup" id="Q9LNA5">
    <property type="interactions" value="281"/>
</dbReference>
<dbReference type="STRING" id="3702.Q9LNA5"/>
<dbReference type="iPTMnet" id="Q9LNA5"/>
<dbReference type="PaxDb" id="3702-AT1G12420.1"/>
<dbReference type="ProteomicsDB" id="244711"/>
<dbReference type="EnsemblPlants" id="AT1G12420.1">
    <property type="protein sequence ID" value="AT1G12420.1"/>
    <property type="gene ID" value="AT1G12420"/>
</dbReference>
<dbReference type="GeneID" id="837798"/>
<dbReference type="Gramene" id="AT1G12420.1">
    <property type="protein sequence ID" value="AT1G12420.1"/>
    <property type="gene ID" value="AT1G12420"/>
</dbReference>
<dbReference type="KEGG" id="ath:AT1G12420"/>
<dbReference type="Araport" id="AT1G12420"/>
<dbReference type="TAIR" id="AT1G12420">
    <property type="gene designation" value="ACR8"/>
</dbReference>
<dbReference type="eggNOG" id="ENOG502QS10">
    <property type="taxonomic scope" value="Eukaryota"/>
</dbReference>
<dbReference type="HOGENOM" id="CLU_031332_3_0_1"/>
<dbReference type="InParanoid" id="Q9LNA5"/>
<dbReference type="OMA" id="VINIHCK"/>
<dbReference type="PhylomeDB" id="Q9LNA5"/>
<dbReference type="PRO" id="PR:Q9LNA5"/>
<dbReference type="Proteomes" id="UP000006548">
    <property type="component" value="Chromosome 1"/>
</dbReference>
<dbReference type="ExpressionAtlas" id="Q9LNA5">
    <property type="expression patterns" value="baseline and differential"/>
</dbReference>
<dbReference type="GO" id="GO:0016597">
    <property type="term" value="F:amino acid binding"/>
    <property type="evidence" value="ECO:0000250"/>
    <property type="project" value="TAIR"/>
</dbReference>
<dbReference type="GO" id="GO:0009737">
    <property type="term" value="P:response to abscisic acid"/>
    <property type="evidence" value="ECO:0000270"/>
    <property type="project" value="TAIR"/>
</dbReference>
<dbReference type="CDD" id="cd04895">
    <property type="entry name" value="ACT_ACR_1"/>
    <property type="match status" value="1"/>
</dbReference>
<dbReference type="CDD" id="cd04925">
    <property type="entry name" value="ACT_ACR_2"/>
    <property type="match status" value="1"/>
</dbReference>
<dbReference type="CDD" id="cd04897">
    <property type="entry name" value="ACT_ACR_3"/>
    <property type="match status" value="1"/>
</dbReference>
<dbReference type="CDD" id="cd04926">
    <property type="entry name" value="ACT_ACR_4"/>
    <property type="match status" value="1"/>
</dbReference>
<dbReference type="FunFam" id="3.30.70.260:FF:000061">
    <property type="entry name" value="ACT domain repeat 1"/>
    <property type="match status" value="1"/>
</dbReference>
<dbReference type="Gene3D" id="3.30.70.260">
    <property type="match status" value="2"/>
</dbReference>
<dbReference type="InterPro" id="IPR040217">
    <property type="entry name" value="ACR1-12"/>
</dbReference>
<dbReference type="InterPro" id="IPR045865">
    <property type="entry name" value="ACT-like_dom_sf"/>
</dbReference>
<dbReference type="InterPro" id="IPR002912">
    <property type="entry name" value="ACT_dom"/>
</dbReference>
<dbReference type="PANTHER" id="PTHR31096">
    <property type="entry name" value="ACT DOMAIN-CONTAINING PROTEIN ACR4-RELATED"/>
    <property type="match status" value="1"/>
</dbReference>
<dbReference type="PANTHER" id="PTHR31096:SF6">
    <property type="entry name" value="ACT DOMAIN-CONTAINING PROTEIN ACR8"/>
    <property type="match status" value="1"/>
</dbReference>
<dbReference type="Pfam" id="PF01842">
    <property type="entry name" value="ACT"/>
    <property type="match status" value="1"/>
</dbReference>
<dbReference type="Pfam" id="PF24931">
    <property type="entry name" value="ACT_ACR9_3rd"/>
    <property type="match status" value="1"/>
</dbReference>
<dbReference type="SUPFAM" id="SSF55021">
    <property type="entry name" value="ACT-like"/>
    <property type="match status" value="4"/>
</dbReference>
<dbReference type="PROSITE" id="PS51671">
    <property type="entry name" value="ACT"/>
    <property type="match status" value="3"/>
</dbReference>
<comment type="function">
    <text evidence="3">May bind amino acids.</text>
</comment>
<comment type="tissue specificity">
    <text evidence="2">Expressed in roots, leaves, flowers and siliques.</text>
</comment>
<comment type="induction">
    <text evidence="2">By abscisic acid (ABA), and cold and salt stresses.</text>
</comment>
<name>ACR8_ARATH</name>
<protein>
    <recommendedName>
        <fullName evidence="4">ACT domain-containing protein ACR8</fullName>
    </recommendedName>
    <alternativeName>
        <fullName evidence="3">Protein ACT DOMAIN REPEATS 8</fullName>
    </alternativeName>
</protein>
<organism>
    <name type="scientific">Arabidopsis thaliana</name>
    <name type="common">Mouse-ear cress</name>
    <dbReference type="NCBI Taxonomy" id="3702"/>
    <lineage>
        <taxon>Eukaryota</taxon>
        <taxon>Viridiplantae</taxon>
        <taxon>Streptophyta</taxon>
        <taxon>Embryophyta</taxon>
        <taxon>Tracheophyta</taxon>
        <taxon>Spermatophyta</taxon>
        <taxon>Magnoliopsida</taxon>
        <taxon>eudicotyledons</taxon>
        <taxon>Gunneridae</taxon>
        <taxon>Pentapetalae</taxon>
        <taxon>rosids</taxon>
        <taxon>malvids</taxon>
        <taxon>Brassicales</taxon>
        <taxon>Brassicaceae</taxon>
        <taxon>Camelineae</taxon>
        <taxon>Arabidopsis</taxon>
    </lineage>
</organism>